<evidence type="ECO:0000255" key="1">
    <source>
        <dbReference type="HAMAP-Rule" id="MF_00318"/>
    </source>
</evidence>
<comment type="function">
    <text evidence="1">Catalyzes the reversible conversion of 2-phosphoglycerate (2-PG) into phosphoenolpyruvate (PEP). It is essential for the degradation of carbohydrates via glycolysis.</text>
</comment>
<comment type="catalytic activity">
    <reaction evidence="1">
        <text>(2R)-2-phosphoglycerate = phosphoenolpyruvate + H2O</text>
        <dbReference type="Rhea" id="RHEA:10164"/>
        <dbReference type="ChEBI" id="CHEBI:15377"/>
        <dbReference type="ChEBI" id="CHEBI:58289"/>
        <dbReference type="ChEBI" id="CHEBI:58702"/>
        <dbReference type="EC" id="4.2.1.11"/>
    </reaction>
</comment>
<comment type="cofactor">
    <cofactor evidence="1">
        <name>Mg(2+)</name>
        <dbReference type="ChEBI" id="CHEBI:18420"/>
    </cofactor>
    <text evidence="1">Binds a second Mg(2+) ion via substrate during catalysis.</text>
</comment>
<comment type="pathway">
    <text evidence="1">Carbohydrate degradation; glycolysis; pyruvate from D-glyceraldehyde 3-phosphate: step 4/5.</text>
</comment>
<comment type="subcellular location">
    <subcellularLocation>
        <location evidence="1">Cytoplasm</location>
    </subcellularLocation>
    <subcellularLocation>
        <location evidence="1">Secreted</location>
    </subcellularLocation>
    <subcellularLocation>
        <location evidence="1">Cell surface</location>
    </subcellularLocation>
    <text evidence="1">Fractions of enolase are present in both the cytoplasm and on the cell surface.</text>
</comment>
<comment type="similarity">
    <text evidence="1">Belongs to the enolase family.</text>
</comment>
<name>ENO_PROMP</name>
<protein>
    <recommendedName>
        <fullName evidence="1">Enolase</fullName>
        <ecNumber evidence="1">4.2.1.11</ecNumber>
    </recommendedName>
    <alternativeName>
        <fullName evidence="1">2-phospho-D-glycerate hydro-lyase</fullName>
    </alternativeName>
    <alternativeName>
        <fullName evidence="1">2-phosphoglycerate dehydratase</fullName>
    </alternativeName>
</protein>
<accession>Q7V377</accession>
<sequence length="430" mass="45899">MKETIDFLIDTIEARQVLDSRGNPTVEAEVFLECGAIGRAIVPSGASTGAHEAHELRDGGTKYMGKGVLNAVNKIHETISPALCGLSALDQTSIDNLMIEIDGTPNKSSLGANSILAVSLANARAASNALDLPLYRYLGDPLSNLLPVPLMNVINGGAHAPNGLDCQEFMLVPHGVKTFSEALRIGTEIFHSLKSLLEKKGLSTAVGDEGGFAPELSSSEAAGDLLLEAIQKAGFIPGEQVSLALDVASTEFYKDGFYKYEGKSLTSSQMISYLSNLVSNYPIVSIEDGLAEDDWEGWSALNKEIGNKVQLVGDDLFVTNTERLRKGILEKSANSILIKVNQIGTLTETLEAMDLAKSAGFTSVISHRSGETEDTTIADLSVATRAGQIKTGSLSRSERIAKYNRLLRIEEELGDQARFAGDLGLGPKNI</sequence>
<gene>
    <name evidence="1" type="primary">eno</name>
    <name type="ordered locus">PMM0208</name>
</gene>
<proteinExistence type="inferred from homology"/>
<dbReference type="EC" id="4.2.1.11" evidence="1"/>
<dbReference type="EMBL" id="BX548174">
    <property type="protein sequence ID" value="CAE18667.1"/>
    <property type="molecule type" value="Genomic_DNA"/>
</dbReference>
<dbReference type="RefSeq" id="WP_011131847.1">
    <property type="nucleotide sequence ID" value="NC_005072.1"/>
</dbReference>
<dbReference type="SMR" id="Q7V377"/>
<dbReference type="STRING" id="59919.PMM0208"/>
<dbReference type="KEGG" id="pmm:PMM0208"/>
<dbReference type="eggNOG" id="COG0148">
    <property type="taxonomic scope" value="Bacteria"/>
</dbReference>
<dbReference type="HOGENOM" id="CLU_031223_2_1_3"/>
<dbReference type="OrthoDB" id="9804716at2"/>
<dbReference type="UniPathway" id="UPA00109">
    <property type="reaction ID" value="UER00187"/>
</dbReference>
<dbReference type="Proteomes" id="UP000001026">
    <property type="component" value="Chromosome"/>
</dbReference>
<dbReference type="GO" id="GO:0009986">
    <property type="term" value="C:cell surface"/>
    <property type="evidence" value="ECO:0007669"/>
    <property type="project" value="UniProtKB-SubCell"/>
</dbReference>
<dbReference type="GO" id="GO:0005576">
    <property type="term" value="C:extracellular region"/>
    <property type="evidence" value="ECO:0007669"/>
    <property type="project" value="UniProtKB-SubCell"/>
</dbReference>
<dbReference type="GO" id="GO:0000015">
    <property type="term" value="C:phosphopyruvate hydratase complex"/>
    <property type="evidence" value="ECO:0007669"/>
    <property type="project" value="InterPro"/>
</dbReference>
<dbReference type="GO" id="GO:0000287">
    <property type="term" value="F:magnesium ion binding"/>
    <property type="evidence" value="ECO:0007669"/>
    <property type="project" value="UniProtKB-UniRule"/>
</dbReference>
<dbReference type="GO" id="GO:0004634">
    <property type="term" value="F:phosphopyruvate hydratase activity"/>
    <property type="evidence" value="ECO:0007669"/>
    <property type="project" value="UniProtKB-UniRule"/>
</dbReference>
<dbReference type="GO" id="GO:0006096">
    <property type="term" value="P:glycolytic process"/>
    <property type="evidence" value="ECO:0007669"/>
    <property type="project" value="UniProtKB-UniRule"/>
</dbReference>
<dbReference type="CDD" id="cd03313">
    <property type="entry name" value="enolase"/>
    <property type="match status" value="1"/>
</dbReference>
<dbReference type="FunFam" id="3.30.390.10:FF:000001">
    <property type="entry name" value="Enolase"/>
    <property type="match status" value="1"/>
</dbReference>
<dbReference type="Gene3D" id="3.20.20.120">
    <property type="entry name" value="Enolase-like C-terminal domain"/>
    <property type="match status" value="1"/>
</dbReference>
<dbReference type="Gene3D" id="3.30.390.10">
    <property type="entry name" value="Enolase-like, N-terminal domain"/>
    <property type="match status" value="1"/>
</dbReference>
<dbReference type="HAMAP" id="MF_00318">
    <property type="entry name" value="Enolase"/>
    <property type="match status" value="1"/>
</dbReference>
<dbReference type="InterPro" id="IPR000941">
    <property type="entry name" value="Enolase"/>
</dbReference>
<dbReference type="InterPro" id="IPR036849">
    <property type="entry name" value="Enolase-like_C_sf"/>
</dbReference>
<dbReference type="InterPro" id="IPR029017">
    <property type="entry name" value="Enolase-like_N"/>
</dbReference>
<dbReference type="InterPro" id="IPR020810">
    <property type="entry name" value="Enolase_C"/>
</dbReference>
<dbReference type="InterPro" id="IPR020809">
    <property type="entry name" value="Enolase_CS"/>
</dbReference>
<dbReference type="InterPro" id="IPR020811">
    <property type="entry name" value="Enolase_N"/>
</dbReference>
<dbReference type="NCBIfam" id="TIGR01060">
    <property type="entry name" value="eno"/>
    <property type="match status" value="1"/>
</dbReference>
<dbReference type="PANTHER" id="PTHR11902">
    <property type="entry name" value="ENOLASE"/>
    <property type="match status" value="1"/>
</dbReference>
<dbReference type="PANTHER" id="PTHR11902:SF1">
    <property type="entry name" value="ENOLASE"/>
    <property type="match status" value="1"/>
</dbReference>
<dbReference type="Pfam" id="PF00113">
    <property type="entry name" value="Enolase_C"/>
    <property type="match status" value="1"/>
</dbReference>
<dbReference type="Pfam" id="PF03952">
    <property type="entry name" value="Enolase_N"/>
    <property type="match status" value="1"/>
</dbReference>
<dbReference type="PIRSF" id="PIRSF001400">
    <property type="entry name" value="Enolase"/>
    <property type="match status" value="1"/>
</dbReference>
<dbReference type="PRINTS" id="PR00148">
    <property type="entry name" value="ENOLASE"/>
</dbReference>
<dbReference type="SFLD" id="SFLDS00001">
    <property type="entry name" value="Enolase"/>
    <property type="match status" value="1"/>
</dbReference>
<dbReference type="SFLD" id="SFLDF00002">
    <property type="entry name" value="enolase"/>
    <property type="match status" value="1"/>
</dbReference>
<dbReference type="SMART" id="SM01192">
    <property type="entry name" value="Enolase_C"/>
    <property type="match status" value="1"/>
</dbReference>
<dbReference type="SMART" id="SM01193">
    <property type="entry name" value="Enolase_N"/>
    <property type="match status" value="1"/>
</dbReference>
<dbReference type="SUPFAM" id="SSF51604">
    <property type="entry name" value="Enolase C-terminal domain-like"/>
    <property type="match status" value="1"/>
</dbReference>
<dbReference type="SUPFAM" id="SSF54826">
    <property type="entry name" value="Enolase N-terminal domain-like"/>
    <property type="match status" value="1"/>
</dbReference>
<dbReference type="PROSITE" id="PS00164">
    <property type="entry name" value="ENOLASE"/>
    <property type="match status" value="1"/>
</dbReference>
<feature type="chain" id="PRO_0000133948" description="Enolase">
    <location>
        <begin position="1"/>
        <end position="430"/>
    </location>
</feature>
<feature type="active site" description="Proton donor" evidence="1">
    <location>
        <position position="209"/>
    </location>
</feature>
<feature type="active site" description="Proton acceptor" evidence="1">
    <location>
        <position position="339"/>
    </location>
</feature>
<feature type="binding site" evidence="1">
    <location>
        <position position="167"/>
    </location>
    <ligand>
        <name>(2R)-2-phosphoglycerate</name>
        <dbReference type="ChEBI" id="CHEBI:58289"/>
    </ligand>
</feature>
<feature type="binding site" evidence="1">
    <location>
        <position position="246"/>
    </location>
    <ligand>
        <name>Mg(2+)</name>
        <dbReference type="ChEBI" id="CHEBI:18420"/>
    </ligand>
</feature>
<feature type="binding site" evidence="1">
    <location>
        <position position="287"/>
    </location>
    <ligand>
        <name>Mg(2+)</name>
        <dbReference type="ChEBI" id="CHEBI:18420"/>
    </ligand>
</feature>
<feature type="binding site" evidence="1">
    <location>
        <position position="314"/>
    </location>
    <ligand>
        <name>Mg(2+)</name>
        <dbReference type="ChEBI" id="CHEBI:18420"/>
    </ligand>
</feature>
<feature type="binding site" evidence="1">
    <location>
        <position position="339"/>
    </location>
    <ligand>
        <name>(2R)-2-phosphoglycerate</name>
        <dbReference type="ChEBI" id="CHEBI:58289"/>
    </ligand>
</feature>
<feature type="binding site" evidence="1">
    <location>
        <position position="368"/>
    </location>
    <ligand>
        <name>(2R)-2-phosphoglycerate</name>
        <dbReference type="ChEBI" id="CHEBI:58289"/>
    </ligand>
</feature>
<feature type="binding site" evidence="1">
    <location>
        <position position="369"/>
    </location>
    <ligand>
        <name>(2R)-2-phosphoglycerate</name>
        <dbReference type="ChEBI" id="CHEBI:58289"/>
    </ligand>
</feature>
<feature type="binding site" evidence="1">
    <location>
        <position position="390"/>
    </location>
    <ligand>
        <name>(2R)-2-phosphoglycerate</name>
        <dbReference type="ChEBI" id="CHEBI:58289"/>
    </ligand>
</feature>
<reference key="1">
    <citation type="journal article" date="2003" name="Nature">
        <title>Genome divergence in two Prochlorococcus ecotypes reflects oceanic niche differentiation.</title>
        <authorList>
            <person name="Rocap G."/>
            <person name="Larimer F.W."/>
            <person name="Lamerdin J.E."/>
            <person name="Malfatti S."/>
            <person name="Chain P."/>
            <person name="Ahlgren N.A."/>
            <person name="Arellano A."/>
            <person name="Coleman M."/>
            <person name="Hauser L."/>
            <person name="Hess W.R."/>
            <person name="Johnson Z.I."/>
            <person name="Land M.L."/>
            <person name="Lindell D."/>
            <person name="Post A.F."/>
            <person name="Regala W."/>
            <person name="Shah M."/>
            <person name="Shaw S.L."/>
            <person name="Steglich C."/>
            <person name="Sullivan M.B."/>
            <person name="Ting C.S."/>
            <person name="Tolonen A."/>
            <person name="Webb E.A."/>
            <person name="Zinser E.R."/>
            <person name="Chisholm S.W."/>
        </authorList>
    </citation>
    <scope>NUCLEOTIDE SEQUENCE [LARGE SCALE GENOMIC DNA]</scope>
    <source>
        <strain>CCMP1986 / NIES-2087 / MED4</strain>
    </source>
</reference>
<keyword id="KW-0963">Cytoplasm</keyword>
<keyword id="KW-0324">Glycolysis</keyword>
<keyword id="KW-0456">Lyase</keyword>
<keyword id="KW-0460">Magnesium</keyword>
<keyword id="KW-0479">Metal-binding</keyword>
<keyword id="KW-0964">Secreted</keyword>
<organism>
    <name type="scientific">Prochlorococcus marinus subsp. pastoris (strain CCMP1986 / NIES-2087 / MED4)</name>
    <dbReference type="NCBI Taxonomy" id="59919"/>
    <lineage>
        <taxon>Bacteria</taxon>
        <taxon>Bacillati</taxon>
        <taxon>Cyanobacteriota</taxon>
        <taxon>Cyanophyceae</taxon>
        <taxon>Synechococcales</taxon>
        <taxon>Prochlorococcaceae</taxon>
        <taxon>Prochlorococcus</taxon>
    </lineage>
</organism>